<accession>P36177</accession>
<reference key="1">
    <citation type="journal article" date="1994" name="J. Biol. Chem.">
        <title>Isolation and characterization of cDNA clones for chloroplast translational initiation factor-3 from Euglena gracilis.</title>
        <authorList>
            <person name="Lin Q."/>
            <person name="Ma L."/>
            <person name="Burkhart W."/>
            <person name="Spremulli L.L."/>
        </authorList>
    </citation>
    <scope>NUCLEOTIDE SEQUENCE [MRNA]</scope>
    <scope>PARTIAL PROTEIN SEQUENCE</scope>
    <source>
        <strain>B</strain>
    </source>
</reference>
<reference key="2">
    <citation type="journal article" date="1994" name="J. Biol. Chem.">
        <authorList>
            <person name="Lin Q."/>
            <person name="Ma L."/>
            <person name="Burkhart W."/>
            <person name="Spremulli L.L."/>
        </authorList>
    </citation>
    <scope>ERRATUM OF PUBMED:8144528</scope>
</reference>
<keyword id="KW-0150">Chloroplast</keyword>
<keyword id="KW-0903">Direct protein sequencing</keyword>
<keyword id="KW-0396">Initiation factor</keyword>
<keyword id="KW-0934">Plastid</keyword>
<keyword id="KW-0648">Protein biosynthesis</keyword>
<keyword id="KW-0809">Transit peptide</keyword>
<evidence type="ECO:0000255" key="1"/>
<evidence type="ECO:0000256" key="2">
    <source>
        <dbReference type="SAM" id="MobiDB-lite"/>
    </source>
</evidence>
<evidence type="ECO:0000305" key="3"/>
<organism>
    <name type="scientific">Euglena gracilis</name>
    <dbReference type="NCBI Taxonomy" id="3039"/>
    <lineage>
        <taxon>Eukaryota</taxon>
        <taxon>Discoba</taxon>
        <taxon>Euglenozoa</taxon>
        <taxon>Euglenida</taxon>
        <taxon>Spirocuta</taxon>
        <taxon>Euglenophyceae</taxon>
        <taxon>Euglenales</taxon>
        <taxon>Euglenaceae</taxon>
        <taxon>Euglena</taxon>
    </lineage>
</organism>
<feature type="transit peptide" description="Chloroplast" evidence="1">
    <location>
        <begin position="1"/>
        <end position="140" status="uncertain"/>
    </location>
</feature>
<feature type="chain" id="PRO_0000014501" description="Translation initiation factor IF-3, chloroplastic">
    <location>
        <begin position="141" status="uncertain"/>
        <end position="538"/>
    </location>
</feature>
<feature type="region of interest" description="Head">
    <location>
        <begin position="141"/>
        <end position="290"/>
    </location>
</feature>
<feature type="region of interest" description="Disordered" evidence="2">
    <location>
        <begin position="146"/>
        <end position="165"/>
    </location>
</feature>
<feature type="region of interest" description="Disordered" evidence="2">
    <location>
        <begin position="188"/>
        <end position="210"/>
    </location>
</feature>
<feature type="region of interest" description="IF-3 like">
    <location>
        <begin position="291"/>
        <end position="474"/>
    </location>
</feature>
<feature type="region of interest" description="Disordered" evidence="2">
    <location>
        <begin position="484"/>
        <end position="538"/>
    </location>
</feature>
<feature type="compositionally biased region" description="Acidic residues" evidence="2">
    <location>
        <begin position="493"/>
        <end position="530"/>
    </location>
</feature>
<comment type="function">
    <text>Involved in chloroplast protein synthesis. It enhances the poly(A,U,G)-dependent binding of the initiator tRNA to chloroplast 30S subunits.</text>
</comment>
<comment type="subunit">
    <text>Monomer.</text>
</comment>
<comment type="subcellular location">
    <subcellularLocation>
        <location>Plastid</location>
        <location>Chloroplast</location>
    </subcellularLocation>
</comment>
<comment type="PTM">
    <text>The N-terminus is blocked.</text>
</comment>
<comment type="similarity">
    <text evidence="3">Belongs to the IF-3 family.</text>
</comment>
<proteinExistence type="evidence at protein level"/>
<sequence>MVRSSCLQCDQPSQGSNSTFGCGGPLAAVCATGLLVLVLYSPSSQTANWSAQGISTKALYPAVPVPSTLLPGSAPAKHQLHVWRAHAMSEATTNNSFKQSLFGYNAISSIWLQLAGVAATFFAFGALMAAVTQRKEIAVFSASGQAAEPEGAEPLKRPFPSPAAKPKPLFSTPANSFSNIFQAPPSLRTDSTYGRGPRSTSFTDISNWPSNNALRNPQSVIDIGGGVDFLGDRSPGNPFTRLRGSPSSTLSNLGMGLGLGLGKGKGFGKGFGKGRGFPVEEEVEEEQEVLSWADRRRALADPDAPPMNEDIKYPQLRLVRAVPGGRDEKLGVMSRQEALELAEAEDIDLVLVSIDTDPPVAKLVNYSKLKYESEKKKKDSHKKGKVKEVKELKVSHKIGQHDYDVRVKQARKFLEGGHRIKVSMEFKGRENQFVEIGRAVMKRFQNDLADMGKADAVPKKLGTRLILNLAPAGEALKVIAERRAERDRKAAAEEEGEGDDLDFVDENEDEDVEGEGEEEEAEELEEETAEGTEVPTRS</sequence>
<protein>
    <recommendedName>
        <fullName>Translation initiation factor IF-3, chloroplastic</fullName>
        <shortName>IF-3chl</shortName>
    </recommendedName>
</protein>
<name>IF3C_EUGGR</name>
<dbReference type="EMBL" id="L23760">
    <property type="protein sequence ID" value="AAA20996.1"/>
    <property type="molecule type" value="mRNA"/>
</dbReference>
<dbReference type="PIR" id="A58905">
    <property type="entry name" value="A54391"/>
</dbReference>
<dbReference type="SMR" id="P36177"/>
<dbReference type="GO" id="GO:0009507">
    <property type="term" value="C:chloroplast"/>
    <property type="evidence" value="ECO:0007669"/>
    <property type="project" value="UniProtKB-SubCell"/>
</dbReference>
<dbReference type="GO" id="GO:0043022">
    <property type="term" value="F:ribosome binding"/>
    <property type="evidence" value="ECO:0007669"/>
    <property type="project" value="TreeGrafter"/>
</dbReference>
<dbReference type="GO" id="GO:0003743">
    <property type="term" value="F:translation initiation factor activity"/>
    <property type="evidence" value="ECO:0007669"/>
    <property type="project" value="UniProtKB-KW"/>
</dbReference>
<dbReference type="GO" id="GO:0032790">
    <property type="term" value="P:ribosome disassembly"/>
    <property type="evidence" value="ECO:0007669"/>
    <property type="project" value="TreeGrafter"/>
</dbReference>
<dbReference type="Gene3D" id="3.30.110.10">
    <property type="entry name" value="Translation initiation factor 3 (IF-3), C-terminal domain"/>
    <property type="match status" value="1"/>
</dbReference>
<dbReference type="Gene3D" id="3.10.20.80">
    <property type="entry name" value="Translation initiation factor 3 (IF-3), N-terminal domain"/>
    <property type="match status" value="1"/>
</dbReference>
<dbReference type="HAMAP" id="MF_00080">
    <property type="entry name" value="IF_3"/>
    <property type="match status" value="1"/>
</dbReference>
<dbReference type="InterPro" id="IPR036788">
    <property type="entry name" value="T_IF-3_C_sf"/>
</dbReference>
<dbReference type="InterPro" id="IPR036787">
    <property type="entry name" value="T_IF-3_N_sf"/>
</dbReference>
<dbReference type="InterPro" id="IPR019813">
    <property type="entry name" value="Translation_initiation_fac3_CS"/>
</dbReference>
<dbReference type="InterPro" id="IPR001288">
    <property type="entry name" value="Translation_initiation_fac_3"/>
</dbReference>
<dbReference type="InterPro" id="IPR019815">
    <property type="entry name" value="Translation_initiation_fac_3_C"/>
</dbReference>
<dbReference type="InterPro" id="IPR019814">
    <property type="entry name" value="Translation_initiation_fac_3_N"/>
</dbReference>
<dbReference type="NCBIfam" id="TIGR00168">
    <property type="entry name" value="infC"/>
    <property type="match status" value="1"/>
</dbReference>
<dbReference type="PANTHER" id="PTHR10938">
    <property type="entry name" value="TRANSLATION INITIATION FACTOR IF-3"/>
    <property type="match status" value="1"/>
</dbReference>
<dbReference type="PANTHER" id="PTHR10938:SF0">
    <property type="entry name" value="TRANSLATION INITIATION FACTOR IF-3, MITOCHONDRIAL"/>
    <property type="match status" value="1"/>
</dbReference>
<dbReference type="Pfam" id="PF00707">
    <property type="entry name" value="IF3_C"/>
    <property type="match status" value="1"/>
</dbReference>
<dbReference type="Pfam" id="PF05198">
    <property type="entry name" value="IF3_N"/>
    <property type="match status" value="1"/>
</dbReference>
<dbReference type="SUPFAM" id="SSF55200">
    <property type="entry name" value="Translation initiation factor IF3, C-terminal domain"/>
    <property type="match status" value="1"/>
</dbReference>
<dbReference type="SUPFAM" id="SSF54364">
    <property type="entry name" value="Translation initiation factor IF3, N-terminal domain"/>
    <property type="match status" value="1"/>
</dbReference>
<dbReference type="PROSITE" id="PS00938">
    <property type="entry name" value="IF3"/>
    <property type="match status" value="1"/>
</dbReference>